<feature type="chain" id="PRO_0000460247" description="Vacuolar protein sorting-associated protein 39 homolog">
    <location>
        <begin position="1"/>
        <end position="876"/>
    </location>
</feature>
<feature type="domain" description="CNH" evidence="2">
    <location>
        <begin position="14"/>
        <end position="310"/>
    </location>
</feature>
<feature type="repeat" description="CHCR" evidence="3">
    <location>
        <begin position="578"/>
        <end position="741"/>
    </location>
</feature>
<sequence>MHQAYSVHSILKQGVQIESIAAYGNHVILGTRSGQLIMYSVDEETGVDMRMFNKNFSRKPITQMEVIASENLLFVLTDLQVQVCDIRRIESNFAFMHSAPDTKGCTLFTMDVDTPKSTTGRVATVIRVCCAIRRRLVFFFWKEDKLNSLELIIELSDVPRTLCWVGHAVCVGFKDEYVVYDISGKAPKKHNLFLTSSSISRDPCICLIRNNMLGISKDSYLVVVDPSQYKESDGINNSTDVRPAAMDSNSSLTPLLWSSPLLDLVWDEPFAVGRVNNAIEVRSLVGKDTLVQTIPELQKTKFLVHADKGTIFAAATSELWCIRMVEIPIQRQQLLQQKKFQLAIELTQISDEPAADRAQTIRQIHMLYAKELFTNKEFSAAMKEFEKAAIDPYDVIRLFPNLVPEPKPGTEDVTVPTSSTPALEDSDLENAYLALIEYLAWARQREVVKLRDTKSSSKSLLEIIDTTLLKCYLQTNDSLVAPLLRLNQCHLEESEKTLKKHNKISELIILYQMKGKHKEALKLLREQASIEGSVLQGRKRTIRYLQELGGDHLPLIFEFADWVLNDNPEEGLTIFTDELIEVESLPRAKVLDFFISKHKALVIPYLEHVITEWKDGNTLLHNVLLKQYREKVQRLLAQQEKGEEVPELIPMRAKLYKMLEESNDYSPDRLLEEFPTNILLEERALILGRLKKHDNVLSIYIHVLGDVAKATAYAEAHYKEDKHIFHTLIKCILIPPTQPLYDGVPLHPDFSQVNREVALEILNTHATRIDPFEIFEHLPDDMPMPQLEKYLEKSIRKMMADKHEMQMMCGFLEAESTRLENALEEQRNISFELNESSVCSECKKRFQTQSAFVRYPNGHIVHLSCHDRLARAAAQQ</sequence>
<reference evidence="12" key="1">
    <citation type="journal article" date="2000" name="Science">
        <title>The genome sequence of Drosophila melanogaster.</title>
        <authorList>
            <person name="Adams M.D."/>
            <person name="Celniker S.E."/>
            <person name="Holt R.A."/>
            <person name="Evans C.A."/>
            <person name="Gocayne J.D."/>
            <person name="Amanatides P.G."/>
            <person name="Scherer S.E."/>
            <person name="Li P.W."/>
            <person name="Hoskins R.A."/>
            <person name="Galle R.F."/>
            <person name="George R.A."/>
            <person name="Lewis S.E."/>
            <person name="Richards S."/>
            <person name="Ashburner M."/>
            <person name="Henderson S.N."/>
            <person name="Sutton G.G."/>
            <person name="Wortman J.R."/>
            <person name="Yandell M.D."/>
            <person name="Zhang Q."/>
            <person name="Chen L.X."/>
            <person name="Brandon R.C."/>
            <person name="Rogers Y.-H.C."/>
            <person name="Blazej R.G."/>
            <person name="Champe M."/>
            <person name="Pfeiffer B.D."/>
            <person name="Wan K.H."/>
            <person name="Doyle C."/>
            <person name="Baxter E.G."/>
            <person name="Helt G."/>
            <person name="Nelson C.R."/>
            <person name="Miklos G.L.G."/>
            <person name="Abril J.F."/>
            <person name="Agbayani A."/>
            <person name="An H.-J."/>
            <person name="Andrews-Pfannkoch C."/>
            <person name="Baldwin D."/>
            <person name="Ballew R.M."/>
            <person name="Basu A."/>
            <person name="Baxendale J."/>
            <person name="Bayraktaroglu L."/>
            <person name="Beasley E.M."/>
            <person name="Beeson K.Y."/>
            <person name="Benos P.V."/>
            <person name="Berman B.P."/>
            <person name="Bhandari D."/>
            <person name="Bolshakov S."/>
            <person name="Borkova D."/>
            <person name="Botchan M.R."/>
            <person name="Bouck J."/>
            <person name="Brokstein P."/>
            <person name="Brottier P."/>
            <person name="Burtis K.C."/>
            <person name="Busam D.A."/>
            <person name="Butler H."/>
            <person name="Cadieu E."/>
            <person name="Center A."/>
            <person name="Chandra I."/>
            <person name="Cherry J.M."/>
            <person name="Cawley S."/>
            <person name="Dahlke C."/>
            <person name="Davenport L.B."/>
            <person name="Davies P."/>
            <person name="de Pablos B."/>
            <person name="Delcher A."/>
            <person name="Deng Z."/>
            <person name="Mays A.D."/>
            <person name="Dew I."/>
            <person name="Dietz S.M."/>
            <person name="Dodson K."/>
            <person name="Doup L.E."/>
            <person name="Downes M."/>
            <person name="Dugan-Rocha S."/>
            <person name="Dunkov B.C."/>
            <person name="Dunn P."/>
            <person name="Durbin K.J."/>
            <person name="Evangelista C.C."/>
            <person name="Ferraz C."/>
            <person name="Ferriera S."/>
            <person name="Fleischmann W."/>
            <person name="Fosler C."/>
            <person name="Gabrielian A.E."/>
            <person name="Garg N.S."/>
            <person name="Gelbart W.M."/>
            <person name="Glasser K."/>
            <person name="Glodek A."/>
            <person name="Gong F."/>
            <person name="Gorrell J.H."/>
            <person name="Gu Z."/>
            <person name="Guan P."/>
            <person name="Harris M."/>
            <person name="Harris N.L."/>
            <person name="Harvey D.A."/>
            <person name="Heiman T.J."/>
            <person name="Hernandez J.R."/>
            <person name="Houck J."/>
            <person name="Hostin D."/>
            <person name="Houston K.A."/>
            <person name="Howland T.J."/>
            <person name="Wei M.-H."/>
            <person name="Ibegwam C."/>
            <person name="Jalali M."/>
            <person name="Kalush F."/>
            <person name="Karpen G.H."/>
            <person name="Ke Z."/>
            <person name="Kennison J.A."/>
            <person name="Ketchum K.A."/>
            <person name="Kimmel B.E."/>
            <person name="Kodira C.D."/>
            <person name="Kraft C.L."/>
            <person name="Kravitz S."/>
            <person name="Kulp D."/>
            <person name="Lai Z."/>
            <person name="Lasko P."/>
            <person name="Lei Y."/>
            <person name="Levitsky A.A."/>
            <person name="Li J.H."/>
            <person name="Li Z."/>
            <person name="Liang Y."/>
            <person name="Lin X."/>
            <person name="Liu X."/>
            <person name="Mattei B."/>
            <person name="McIntosh T.C."/>
            <person name="McLeod M.P."/>
            <person name="McPherson D."/>
            <person name="Merkulov G."/>
            <person name="Milshina N.V."/>
            <person name="Mobarry C."/>
            <person name="Morris J."/>
            <person name="Moshrefi A."/>
            <person name="Mount S.M."/>
            <person name="Moy M."/>
            <person name="Murphy B."/>
            <person name="Murphy L."/>
            <person name="Muzny D.M."/>
            <person name="Nelson D.L."/>
            <person name="Nelson D.R."/>
            <person name="Nelson K.A."/>
            <person name="Nixon K."/>
            <person name="Nusskern D.R."/>
            <person name="Pacleb J.M."/>
            <person name="Palazzolo M."/>
            <person name="Pittman G.S."/>
            <person name="Pan S."/>
            <person name="Pollard J."/>
            <person name="Puri V."/>
            <person name="Reese M.G."/>
            <person name="Reinert K."/>
            <person name="Remington K."/>
            <person name="Saunders R.D.C."/>
            <person name="Scheeler F."/>
            <person name="Shen H."/>
            <person name="Shue B.C."/>
            <person name="Siden-Kiamos I."/>
            <person name="Simpson M."/>
            <person name="Skupski M.P."/>
            <person name="Smith T.J."/>
            <person name="Spier E."/>
            <person name="Spradling A.C."/>
            <person name="Stapleton M."/>
            <person name="Strong R."/>
            <person name="Sun E."/>
            <person name="Svirskas R."/>
            <person name="Tector C."/>
            <person name="Turner R."/>
            <person name="Venter E."/>
            <person name="Wang A.H."/>
            <person name="Wang X."/>
            <person name="Wang Z.-Y."/>
            <person name="Wassarman D.A."/>
            <person name="Weinstock G.M."/>
            <person name="Weissenbach J."/>
            <person name="Williams S.M."/>
            <person name="Woodage T."/>
            <person name="Worley K.C."/>
            <person name="Wu D."/>
            <person name="Yang S."/>
            <person name="Yao Q.A."/>
            <person name="Ye J."/>
            <person name="Yeh R.-F."/>
            <person name="Zaveri J.S."/>
            <person name="Zhan M."/>
            <person name="Zhang G."/>
            <person name="Zhao Q."/>
            <person name="Zheng L."/>
            <person name="Zheng X.H."/>
            <person name="Zhong F.N."/>
            <person name="Zhong W."/>
            <person name="Zhou X."/>
            <person name="Zhu S.C."/>
            <person name="Zhu X."/>
            <person name="Smith H.O."/>
            <person name="Gibbs R.A."/>
            <person name="Myers E.W."/>
            <person name="Rubin G.M."/>
            <person name="Venter J.C."/>
        </authorList>
    </citation>
    <scope>NUCLEOTIDE SEQUENCE [LARGE SCALE GENOMIC DNA]</scope>
    <source>
        <strain evidence="12">Berkeley</strain>
    </source>
</reference>
<reference evidence="12" key="2">
    <citation type="journal article" date="2002" name="Genome Biol.">
        <title>Annotation of the Drosophila melanogaster euchromatic genome: a systematic review.</title>
        <authorList>
            <person name="Misra S."/>
            <person name="Crosby M.A."/>
            <person name="Mungall C.J."/>
            <person name="Matthews B.B."/>
            <person name="Campbell K.S."/>
            <person name="Hradecky P."/>
            <person name="Huang Y."/>
            <person name="Kaminker J.S."/>
            <person name="Millburn G.H."/>
            <person name="Prochnik S.E."/>
            <person name="Smith C.D."/>
            <person name="Tupy J.L."/>
            <person name="Whitfield E.J."/>
            <person name="Bayraktaroglu L."/>
            <person name="Berman B.P."/>
            <person name="Bettencourt B.R."/>
            <person name="Celniker S.E."/>
            <person name="de Grey A.D.N.J."/>
            <person name="Drysdale R.A."/>
            <person name="Harris N.L."/>
            <person name="Richter J."/>
            <person name="Russo S."/>
            <person name="Schroeder A.J."/>
            <person name="Shu S.Q."/>
            <person name="Stapleton M."/>
            <person name="Yamada C."/>
            <person name="Ashburner M."/>
            <person name="Gelbart W.M."/>
            <person name="Rubin G.M."/>
            <person name="Lewis S.E."/>
        </authorList>
    </citation>
    <scope>GENOME REANNOTATION</scope>
    <source>
        <strain evidence="12">Berkeley</strain>
    </source>
</reference>
<reference evidence="10" key="3">
    <citation type="journal article" date="2002" name="Genome Biol.">
        <title>A Drosophila full-length cDNA resource.</title>
        <authorList>
            <person name="Stapleton M."/>
            <person name="Carlson J.W."/>
            <person name="Brokstein P."/>
            <person name="Yu C."/>
            <person name="Champe M."/>
            <person name="George R.A."/>
            <person name="Guarin H."/>
            <person name="Kronmiller B."/>
            <person name="Pacleb J.M."/>
            <person name="Park S."/>
            <person name="Wan K.H."/>
            <person name="Rubin G.M."/>
            <person name="Celniker S.E."/>
        </authorList>
    </citation>
    <scope>NUCLEOTIDE SEQUENCE [LARGE SCALE MRNA]</scope>
    <source>
        <strain evidence="10">Berkeley</strain>
        <tissue evidence="10">Head</tissue>
    </source>
</reference>
<reference evidence="8" key="4">
    <citation type="journal article" date="2014" name="Mol. Biol. Cell">
        <title>Interaction of the HOPS complex with Syntaxin 17 mediates autophagosome clearance in Drosophila.</title>
        <authorList>
            <person name="Takats S."/>
            <person name="Pircs K."/>
            <person name="Nagy P."/>
            <person name="Varga A."/>
            <person name="Karpati M."/>
            <person name="Hegedus K."/>
            <person name="Kramer H."/>
            <person name="Kovacs A.L."/>
            <person name="Sass M."/>
            <person name="Juhasz G."/>
        </authorList>
    </citation>
    <scope>FUNCTION</scope>
    <scope>DISRUPTION PHENOTYPE</scope>
</reference>
<reference evidence="8" key="5">
    <citation type="journal article" date="2017" name="Elife">
        <title>Genetic screen in Drosophila muscle identifies autophagy-mediated T-tubule remodeling and a Rab2 role in autophagy.</title>
        <authorList>
            <person name="Fujita N."/>
            <person name="Huang W."/>
            <person name="Lin T.H."/>
            <person name="Groulx J.F."/>
            <person name="Jean S."/>
            <person name="Nguyen J."/>
            <person name="Kuchitsu Y."/>
            <person name="Koyama-Honda I."/>
            <person name="Mizushima N."/>
            <person name="Fukuda M."/>
            <person name="Kiger A.A."/>
        </authorList>
    </citation>
    <scope>FUNCTION</scope>
    <scope>DISRUPTION PHENOTYPE</scope>
</reference>
<reference evidence="8" key="6">
    <citation type="journal article" date="2017" name="J. Cell Biol.">
        <title>Rab2 promotes autophagic and endocytic lysosomal degradation.</title>
        <authorList>
            <person name="Lorincz P."/>
            <person name="Toth S."/>
            <person name="Benko P."/>
            <person name="Lakatos Z."/>
            <person name="Boda A."/>
            <person name="Glatz G."/>
            <person name="Zobel M."/>
            <person name="Bisi S."/>
            <person name="Hegedus K."/>
            <person name="Takats S."/>
            <person name="Scita G."/>
            <person name="Juhasz G."/>
        </authorList>
    </citation>
    <scope>INTERACTION WITH RAB2</scope>
</reference>
<reference evidence="8" key="7">
    <citation type="journal article" date="2019" name="Elife">
        <title>Vps8 overexpression inhibits HOPS-dependent trafficking routes by outcompeting Vps41/Lt.</title>
        <authorList>
            <person name="Lorincz P."/>
            <person name="Kenez L.A."/>
            <person name="Toth S."/>
            <person name="Kiss V."/>
            <person name="Varga A."/>
            <person name="Csizmadia T."/>
            <person name="Simon-Vecsei Z."/>
            <person name="Juhasz G."/>
        </authorList>
    </citation>
    <scope>FUNCTION</scope>
</reference>
<protein>
    <recommendedName>
        <fullName evidence="8">Vacuolar protein sorting-associated protein 39 homolog</fullName>
    </recommendedName>
</protein>
<comment type="function">
    <text evidence="4 5 7">Part of the homotypic fusion and vacuole protein sorting (HOPS) tethering complex involved in endo-lysosomal vesicle trafficking and lysosome biogenesis (PubMed:24554766, PubMed:28063257, PubMed:31194677). The HOPS complex facilitates docking and fusion of lysosomes with late endosomes and several other types of vesicles (PubMed:24554766). The HOPS complex is also involved in autophagy and crinophagy (the elimination of unused secretory granules through their fusion with lysosomes) (PubMed:24554766, PubMed:31194677). The HOPS complex mediates autophagocitic flux, probably by binding autophagosome-associated Syx17/syntaxin 17, promoting assembly of the trans-SNARE complex and instigating autophagosome-lysosome fusion (PubMed:24554766, PubMed:28063257). Independent of Syx17/syntaxin 17, HOPS is involved in biosynthetic transport to lysosomes and lysosome-related organelles such as eye-pigment granules (PubMed:24554766, PubMed:31194677). Required for autophagocytosis-dependent remodeling of myofibrils and transverse-tubules (T-tubules) during metamorphosis (PubMed:28063257).</text>
</comment>
<comment type="subunit">
    <text evidence="6 9">Part of the homotypic fusion and vacuole protein sorting (HOPS) complex, composed of Vps16A, car/Vps33A, dor/Vps18, Vps39, Vps11 and lt/Vps41 (Probable). Interacts with Rab2 (GTP-bound form); the interaction is probably direct (PubMed:28483915).</text>
</comment>
<comment type="subcellular location">
    <subcellularLocation>
        <location evidence="1">Cytoplasm</location>
    </subcellularLocation>
    <subcellularLocation>
        <location evidence="1">Lysosome membrane</location>
        <topology evidence="1">Peripheral membrane protein</topology>
    </subcellularLocation>
    <subcellularLocation>
        <location evidence="1">Late endosome membrane</location>
        <topology evidence="1">Peripheral membrane protein</topology>
    </subcellularLocation>
    <subcellularLocation>
        <location evidence="1">Late endosome</location>
    </subcellularLocation>
    <subcellularLocation>
        <location evidence="1">Lysosome</location>
    </subcellularLocation>
</comment>
<comment type="disruption phenotype">
    <text evidence="4 5">RNAi-mediated knockdown causes impaired autophagosome clearance in fat body cells of starved or wandering 3rd instar (L3) larvae (PubMed:24554766). Conditional RNAi mediated knock-down in muscle cells disrupts transverse-tubule (T-tubule) and myofibril remodeling in internal oblique muscles during metamorphosis (PubMed:28063257).</text>
</comment>
<comment type="similarity">
    <text evidence="8">Belongs to the VAM6/VPS39 family.</text>
</comment>
<dbReference type="EMBL" id="AE014297">
    <property type="protein sequence ID" value="AAF55525.1"/>
    <property type="molecule type" value="Genomic_DNA"/>
</dbReference>
<dbReference type="EMBL" id="AY060674">
    <property type="protein sequence ID" value="AAL28222.1"/>
    <property type="molecule type" value="mRNA"/>
</dbReference>
<dbReference type="RefSeq" id="NP_650702.1">
    <property type="nucleotide sequence ID" value="NM_142445.2"/>
</dbReference>
<dbReference type="SMR" id="Q9VEA2"/>
<dbReference type="ComplexPortal" id="CPX-936">
    <property type="entry name" value="HOPS tethering complex"/>
</dbReference>
<dbReference type="FunCoup" id="Q9VEA2">
    <property type="interactions" value="2388"/>
</dbReference>
<dbReference type="IntAct" id="Q9VEA2">
    <property type="interactions" value="4"/>
</dbReference>
<dbReference type="STRING" id="7227.FBpp0083022"/>
<dbReference type="GlyGen" id="Q9VEA2">
    <property type="glycosylation" value="1 site"/>
</dbReference>
<dbReference type="PaxDb" id="7227-FBpp0083022"/>
<dbReference type="EnsemblMetazoa" id="FBtr0083601">
    <property type="protein sequence ID" value="FBpp0083022"/>
    <property type="gene ID" value="FBgn0038593"/>
</dbReference>
<dbReference type="GeneID" id="42192"/>
<dbReference type="KEGG" id="dme:Dmel_CG7146"/>
<dbReference type="UCSC" id="CG7146-RA">
    <property type="organism name" value="d. melanogaster"/>
</dbReference>
<dbReference type="AGR" id="FB:FBgn0038593"/>
<dbReference type="CTD" id="23339"/>
<dbReference type="FlyBase" id="FBgn0038593">
    <property type="gene designation" value="Vps39"/>
</dbReference>
<dbReference type="VEuPathDB" id="VectorBase:FBgn0038593"/>
<dbReference type="eggNOG" id="KOG2063">
    <property type="taxonomic scope" value="Eukaryota"/>
</dbReference>
<dbReference type="GeneTree" id="ENSGT00530000063596"/>
<dbReference type="HOGENOM" id="CLU_004190_1_1_1"/>
<dbReference type="InParanoid" id="Q9VEA2"/>
<dbReference type="OMA" id="EEYCNQV"/>
<dbReference type="OrthoDB" id="5325112at2759"/>
<dbReference type="BioGRID-ORCS" id="42192">
    <property type="hits" value="1 hit in 3 CRISPR screens"/>
</dbReference>
<dbReference type="GenomeRNAi" id="42192"/>
<dbReference type="Proteomes" id="UP000000803">
    <property type="component" value="Chromosome 3R"/>
</dbReference>
<dbReference type="Bgee" id="FBgn0038593">
    <property type="expression patterns" value="Expressed in midgut large flat cell (Drosophila) in digestive tract and 54 other cell types or tissues"/>
</dbReference>
<dbReference type="GO" id="GO:0005737">
    <property type="term" value="C:cytoplasm"/>
    <property type="evidence" value="ECO:0000318"/>
    <property type="project" value="GO_Central"/>
</dbReference>
<dbReference type="GO" id="GO:0030897">
    <property type="term" value="C:HOPS complex"/>
    <property type="evidence" value="ECO:0000250"/>
    <property type="project" value="FlyBase"/>
</dbReference>
<dbReference type="GO" id="GO:0031902">
    <property type="term" value="C:late endosome membrane"/>
    <property type="evidence" value="ECO:0007669"/>
    <property type="project" value="UniProtKB-SubCell"/>
</dbReference>
<dbReference type="GO" id="GO:0005765">
    <property type="term" value="C:lysosomal membrane"/>
    <property type="evidence" value="ECO:0007669"/>
    <property type="project" value="UniProtKB-SubCell"/>
</dbReference>
<dbReference type="GO" id="GO:0016020">
    <property type="term" value="C:membrane"/>
    <property type="evidence" value="ECO:0000318"/>
    <property type="project" value="GO_Central"/>
</dbReference>
<dbReference type="GO" id="GO:0031267">
    <property type="term" value="F:small GTPase binding"/>
    <property type="evidence" value="ECO:0000353"/>
    <property type="project" value="UniProtKB"/>
</dbReference>
<dbReference type="GO" id="GO:0097352">
    <property type="term" value="P:autophagosome maturation"/>
    <property type="evidence" value="ECO:0000315"/>
    <property type="project" value="FlyBase"/>
</dbReference>
<dbReference type="GO" id="GO:0006914">
    <property type="term" value="P:autophagy"/>
    <property type="evidence" value="ECO:0000318"/>
    <property type="project" value="GO_Central"/>
</dbReference>
<dbReference type="GO" id="GO:0009267">
    <property type="term" value="P:cellular response to starvation"/>
    <property type="evidence" value="ECO:0000315"/>
    <property type="project" value="FlyBase"/>
</dbReference>
<dbReference type="GO" id="GO:0034058">
    <property type="term" value="P:endosomal vesicle fusion"/>
    <property type="evidence" value="ECO:0000315"/>
    <property type="project" value="UniProtKB"/>
</dbReference>
<dbReference type="GO" id="GO:0006886">
    <property type="term" value="P:intracellular protein transport"/>
    <property type="evidence" value="ECO:0007669"/>
    <property type="project" value="InterPro"/>
</dbReference>
<dbReference type="GO" id="GO:0035542">
    <property type="term" value="P:regulation of SNARE complex assembly"/>
    <property type="evidence" value="ECO:0000250"/>
    <property type="project" value="FlyBase"/>
</dbReference>
<dbReference type="GO" id="GO:0160156">
    <property type="term" value="P:secretory granule-lysosome fusion"/>
    <property type="evidence" value="ECO:0000315"/>
    <property type="project" value="FlyBase"/>
</dbReference>
<dbReference type="GO" id="GO:0033292">
    <property type="term" value="P:T-tubule organization"/>
    <property type="evidence" value="ECO:0000315"/>
    <property type="project" value="UniProtKB"/>
</dbReference>
<dbReference type="GO" id="GO:0016192">
    <property type="term" value="P:vesicle-mediated transport"/>
    <property type="evidence" value="ECO:0000250"/>
    <property type="project" value="FlyBase"/>
</dbReference>
<dbReference type="InterPro" id="IPR000547">
    <property type="entry name" value="Clathrin_H-chain/VPS_repeat"/>
</dbReference>
<dbReference type="InterPro" id="IPR001180">
    <property type="entry name" value="CNH_dom"/>
</dbReference>
<dbReference type="InterPro" id="IPR032914">
    <property type="entry name" value="Vam6/VPS39/TRAP1"/>
</dbReference>
<dbReference type="InterPro" id="IPR019452">
    <property type="entry name" value="VPS39/TGF_beta_rcpt-assoc_1"/>
</dbReference>
<dbReference type="InterPro" id="IPR019453">
    <property type="entry name" value="VPS39/TGFA1_Znf"/>
</dbReference>
<dbReference type="InterPro" id="IPR036322">
    <property type="entry name" value="WD40_repeat_dom_sf"/>
</dbReference>
<dbReference type="PANTHER" id="PTHR12894">
    <property type="entry name" value="CNH DOMAIN CONTAINING"/>
    <property type="match status" value="1"/>
</dbReference>
<dbReference type="PANTHER" id="PTHR12894:SF49">
    <property type="entry name" value="VAM6_VPS39-LIKE PROTEIN"/>
    <property type="match status" value="1"/>
</dbReference>
<dbReference type="Pfam" id="PF00780">
    <property type="entry name" value="CNH"/>
    <property type="match status" value="1"/>
</dbReference>
<dbReference type="Pfam" id="PF10366">
    <property type="entry name" value="Vps39_1"/>
    <property type="match status" value="1"/>
</dbReference>
<dbReference type="Pfam" id="PF10367">
    <property type="entry name" value="zf-Vps39_C"/>
    <property type="match status" value="1"/>
</dbReference>
<dbReference type="SUPFAM" id="SSF50978">
    <property type="entry name" value="WD40 repeat-like"/>
    <property type="match status" value="1"/>
</dbReference>
<dbReference type="PROSITE" id="PS50236">
    <property type="entry name" value="CHCR"/>
    <property type="match status" value="1"/>
</dbReference>
<dbReference type="PROSITE" id="PS50219">
    <property type="entry name" value="CNH"/>
    <property type="match status" value="1"/>
</dbReference>
<gene>
    <name evidence="11" type="primary">Vps39</name>
    <name evidence="11" type="ORF">CG7146</name>
</gene>
<accession>Q9VEA2</accession>
<name>VPS39_DROME</name>
<evidence type="ECO:0000250" key="1">
    <source>
        <dbReference type="UniProtKB" id="Q96JC1"/>
    </source>
</evidence>
<evidence type="ECO:0000255" key="2">
    <source>
        <dbReference type="PROSITE-ProRule" id="PRU00795"/>
    </source>
</evidence>
<evidence type="ECO:0000255" key="3">
    <source>
        <dbReference type="PROSITE-ProRule" id="PRU01006"/>
    </source>
</evidence>
<evidence type="ECO:0000269" key="4">
    <source>
    </source>
</evidence>
<evidence type="ECO:0000269" key="5">
    <source>
    </source>
</evidence>
<evidence type="ECO:0000269" key="6">
    <source>
    </source>
</evidence>
<evidence type="ECO:0000269" key="7">
    <source>
    </source>
</evidence>
<evidence type="ECO:0000305" key="8"/>
<evidence type="ECO:0000305" key="9">
    <source>
    </source>
</evidence>
<evidence type="ECO:0000312" key="10">
    <source>
        <dbReference type="EMBL" id="AAL28222.1"/>
    </source>
</evidence>
<evidence type="ECO:0000312" key="11">
    <source>
        <dbReference type="FlyBase" id="FBgn0038593"/>
    </source>
</evidence>
<evidence type="ECO:0000312" key="12">
    <source>
        <dbReference type="Proteomes" id="UP000000803"/>
    </source>
</evidence>
<keyword id="KW-0072">Autophagy</keyword>
<keyword id="KW-0963">Cytoplasm</keyword>
<keyword id="KW-0967">Endosome</keyword>
<keyword id="KW-0458">Lysosome</keyword>
<keyword id="KW-0472">Membrane</keyword>
<keyword id="KW-0653">Protein transport</keyword>
<keyword id="KW-1185">Reference proteome</keyword>
<keyword id="KW-0813">Transport</keyword>
<organism evidence="12">
    <name type="scientific">Drosophila melanogaster</name>
    <name type="common">Fruit fly</name>
    <dbReference type="NCBI Taxonomy" id="7227"/>
    <lineage>
        <taxon>Eukaryota</taxon>
        <taxon>Metazoa</taxon>
        <taxon>Ecdysozoa</taxon>
        <taxon>Arthropoda</taxon>
        <taxon>Hexapoda</taxon>
        <taxon>Insecta</taxon>
        <taxon>Pterygota</taxon>
        <taxon>Neoptera</taxon>
        <taxon>Endopterygota</taxon>
        <taxon>Diptera</taxon>
        <taxon>Brachycera</taxon>
        <taxon>Muscomorpha</taxon>
        <taxon>Ephydroidea</taxon>
        <taxon>Drosophilidae</taxon>
        <taxon>Drosophila</taxon>
        <taxon>Sophophora</taxon>
    </lineage>
</organism>
<proteinExistence type="evidence at protein level"/>